<organism>
    <name type="scientific">Saccharomyces cerevisiae (strain ATCC 204508 / S288c)</name>
    <name type="common">Baker's yeast</name>
    <dbReference type="NCBI Taxonomy" id="559292"/>
    <lineage>
        <taxon>Eukaryota</taxon>
        <taxon>Fungi</taxon>
        <taxon>Dikarya</taxon>
        <taxon>Ascomycota</taxon>
        <taxon>Saccharomycotina</taxon>
        <taxon>Saccharomycetes</taxon>
        <taxon>Saccharomycetales</taxon>
        <taxon>Saccharomycetaceae</taxon>
        <taxon>Saccharomyces</taxon>
    </lineage>
</organism>
<accession>O42831</accession>
<protein>
    <recommendedName>
        <fullName>Putative inosine-5'-monophosphate dehydrogenase-like protein YAR075W</fullName>
    </recommendedName>
</protein>
<feature type="chain" id="PRO_0000248413" description="Putative inosine-5'-monophosphate dehydrogenase-like protein YAR075W">
    <location>
        <begin position="1"/>
        <end position="157"/>
    </location>
</feature>
<evidence type="ECO:0000305" key="1"/>
<evidence type="ECO:0000305" key="2">
    <source>
    </source>
</evidence>
<evidence type="ECO:0000305" key="3">
    <source>
    </source>
</evidence>
<name>YA075_YEAST</name>
<sequence>MVVFKNIGHIITKALALGSSTVMMGGMLAGTTESPGEYLYQDGKRLKAYRGMGSIDAMQKTGTKGNASTSRYFSESDSVLVAQGVSGAVVDKGSIKKFIPYLYNGLQHSCQDIGCRSLTLLKENVQSGKVRFEFRTASAQLEGGVNNLHSYEKRLHN</sequence>
<dbReference type="EMBL" id="L28920">
    <property type="protein sequence ID" value="AAC09511.1"/>
    <property type="molecule type" value="Genomic_DNA"/>
</dbReference>
<dbReference type="EMBL" id="AY692623">
    <property type="protein sequence ID" value="AAT92642.1"/>
    <property type="molecule type" value="Genomic_DNA"/>
</dbReference>
<dbReference type="PIR" id="S78078">
    <property type="entry name" value="S78078"/>
</dbReference>
<dbReference type="SMR" id="O42831"/>
<dbReference type="IntAct" id="O42831">
    <property type="interactions" value="1"/>
</dbReference>
<dbReference type="MINT" id="O42831"/>
<dbReference type="STRING" id="4932.YAR075W"/>
<dbReference type="iPTMnet" id="O42831"/>
<dbReference type="PaxDb" id="4932-YAR075W"/>
<dbReference type="EnsemblFungi" id="YAR075W_mRNA">
    <property type="protein sequence ID" value="YAR075W"/>
    <property type="gene ID" value="YAR075W"/>
</dbReference>
<dbReference type="AGR" id="SGD:S000002145"/>
<dbReference type="SGD" id="S000002145">
    <property type="gene designation" value="YAR075W"/>
</dbReference>
<dbReference type="eggNOG" id="KOG2550">
    <property type="taxonomic scope" value="Eukaryota"/>
</dbReference>
<dbReference type="HOGENOM" id="CLU_022552_5_4_1"/>
<dbReference type="OMA" id="GEYFHHE"/>
<dbReference type="GO" id="GO:0003938">
    <property type="term" value="F:IMP dehydrogenase activity"/>
    <property type="evidence" value="ECO:0007669"/>
    <property type="project" value="InterPro"/>
</dbReference>
<dbReference type="GO" id="GO:0006164">
    <property type="term" value="P:purine nucleotide biosynthetic process"/>
    <property type="evidence" value="ECO:0007669"/>
    <property type="project" value="InterPro"/>
</dbReference>
<dbReference type="FunFam" id="3.20.20.70:FF:000424">
    <property type="entry name" value="Inosine-5'-monophosphate dehydrogenase 2"/>
    <property type="match status" value="1"/>
</dbReference>
<dbReference type="Gene3D" id="3.20.20.70">
    <property type="entry name" value="Aldolase class I"/>
    <property type="match status" value="1"/>
</dbReference>
<dbReference type="InterPro" id="IPR013785">
    <property type="entry name" value="Aldolase_TIM"/>
</dbReference>
<dbReference type="InterPro" id="IPR005990">
    <property type="entry name" value="IMP_DH"/>
</dbReference>
<dbReference type="InterPro" id="IPR001093">
    <property type="entry name" value="IMP_DH_GMPRt"/>
</dbReference>
<dbReference type="PANTHER" id="PTHR11911:SF111">
    <property type="entry name" value="INOSINE-5'-MONOPHOSPHATE DEHYDROGENASE"/>
    <property type="match status" value="1"/>
</dbReference>
<dbReference type="PANTHER" id="PTHR11911">
    <property type="entry name" value="INOSINE-5-MONOPHOSPHATE DEHYDROGENASE RELATED"/>
    <property type="match status" value="1"/>
</dbReference>
<dbReference type="Pfam" id="PF00478">
    <property type="entry name" value="IMPDH"/>
    <property type="match status" value="1"/>
</dbReference>
<dbReference type="SMART" id="SM01240">
    <property type="entry name" value="IMPDH"/>
    <property type="match status" value="1"/>
</dbReference>
<dbReference type="SUPFAM" id="SSF51412">
    <property type="entry name" value="Inosine monophosphate dehydrogenase (IMPDH)"/>
    <property type="match status" value="1"/>
</dbReference>
<reference key="1">
    <citation type="submission" date="1994-02" db="EMBL/GenBank/DDBJ databases">
        <title>Sequencing of chromosome I of Saccharomyces cerevisiae: analysis of the 52 Kbp CDC15-FLO1-PHO11-YAR074 region.</title>
        <authorList>
            <person name="Bussey H."/>
            <person name="Keng T."/>
            <person name="Storms R.K."/>
            <person name="Vo D."/>
            <person name="Zhong W."/>
            <person name="Fortin N."/>
            <person name="Barton A.B."/>
            <person name="Kaback D.B."/>
            <person name="Clark M.W."/>
        </authorList>
    </citation>
    <scope>NUCLEOTIDE SEQUENCE [GENOMIC DNA]</scope>
    <source>
        <strain>ATCC 204511 / S288c / AB972</strain>
    </source>
</reference>
<reference key="2">
    <citation type="journal article" date="1995" name="Proc. Natl. Acad. Sci. U.S.A.">
        <title>The nucleotide sequence of chromosome I from Saccharomyces cerevisiae.</title>
        <authorList>
            <person name="Bussey H."/>
            <person name="Kaback D.B."/>
            <person name="Zhong W.-W."/>
            <person name="Vo D.H."/>
            <person name="Clark M.W."/>
            <person name="Fortin N."/>
            <person name="Hall J."/>
            <person name="Ouellette B.F.F."/>
            <person name="Keng T."/>
            <person name="Barton A.B."/>
            <person name="Su Y."/>
            <person name="Davies C.J."/>
            <person name="Storms R.K."/>
        </authorList>
    </citation>
    <scope>NUCLEOTIDE SEQUENCE [LARGE SCALE GENOMIC DNA]</scope>
    <source>
        <strain>ATCC 204508 / S288c</strain>
    </source>
</reference>
<reference key="3">
    <citation type="journal article" date="2014" name="G3 (Bethesda)">
        <title>The reference genome sequence of Saccharomyces cerevisiae: Then and now.</title>
        <authorList>
            <person name="Engel S.R."/>
            <person name="Dietrich F.S."/>
            <person name="Fisk D.G."/>
            <person name="Binkley G."/>
            <person name="Balakrishnan R."/>
            <person name="Costanzo M.C."/>
            <person name="Dwight S.S."/>
            <person name="Hitz B.C."/>
            <person name="Karra K."/>
            <person name="Nash R.S."/>
            <person name="Weng S."/>
            <person name="Wong E.D."/>
            <person name="Lloyd P."/>
            <person name="Skrzypek M.S."/>
            <person name="Miyasato S.R."/>
            <person name="Simison M."/>
            <person name="Cherry J.M."/>
        </authorList>
    </citation>
    <scope>GENOME REANNOTATION</scope>
    <source>
        <strain>ATCC 204508 / S288c</strain>
    </source>
</reference>
<reference key="4">
    <citation type="journal article" date="2007" name="Genome Res.">
        <title>Approaching a complete repository of sequence-verified protein-encoding clones for Saccharomyces cerevisiae.</title>
        <authorList>
            <person name="Hu Y."/>
            <person name="Rolfs A."/>
            <person name="Bhullar B."/>
            <person name="Murthy T.V.S."/>
            <person name="Zhu C."/>
            <person name="Berger M.F."/>
            <person name="Camargo A.A."/>
            <person name="Kelley F."/>
            <person name="McCarron S."/>
            <person name="Jepson D."/>
            <person name="Richardson A."/>
            <person name="Raphael J."/>
            <person name="Moreira D."/>
            <person name="Taycher E."/>
            <person name="Zuo D."/>
            <person name="Mohr S."/>
            <person name="Kane M.F."/>
            <person name="Williamson J."/>
            <person name="Simpson A.J.G."/>
            <person name="Bulyk M.L."/>
            <person name="Harlow E."/>
            <person name="Marsischky G."/>
            <person name="Kolodner R.D."/>
            <person name="LaBaer J."/>
        </authorList>
    </citation>
    <scope>NUCLEOTIDE SEQUENCE [GENOMIC DNA]</scope>
    <source>
        <strain>ATCC 204508 / S288c</strain>
    </source>
</reference>
<reference key="5">
    <citation type="journal article" date="2003" name="J. Biol. Chem.">
        <title>Functional distinctions between IMP dehydrogenase genes in providing mycophenolate resistance and guanine prototrophy to yeast.</title>
        <authorList>
            <person name="Hyle J.W."/>
            <person name="Shaw R.J."/>
            <person name="Reines D."/>
        </authorList>
    </citation>
    <scope>IDENTIFICATION AS PSEUDOGENE</scope>
</reference>
<proteinExistence type="uncertain"/>
<comment type="similarity">
    <text evidence="1">Belongs to the IMPDH/GMPR family.</text>
</comment>
<comment type="caution">
    <text evidence="2 3">Could be the product of a pseudogene unlikely to encode a functional protein. In strain S288c, this gene has a frameshift compared to the other IMD alleles, producing 2 ORFs YAR073W and YAR075W. Because of that it is not part of the S.cerevisiae S288c complete/reference proteome set.</text>
</comment>
<gene>
    <name type="ordered locus">YAR075W</name>
</gene>